<keyword id="KW-0066">ATP synthesis</keyword>
<keyword id="KW-0138">CF(0)</keyword>
<keyword id="KW-0150">Chloroplast</keyword>
<keyword id="KW-0375">Hydrogen ion transport</keyword>
<keyword id="KW-0406">Ion transport</keyword>
<keyword id="KW-0472">Membrane</keyword>
<keyword id="KW-0934">Plastid</keyword>
<keyword id="KW-0793">Thylakoid</keyword>
<keyword id="KW-0812">Transmembrane</keyword>
<keyword id="KW-1133">Transmembrane helix</keyword>
<keyword id="KW-0813">Transport</keyword>
<proteinExistence type="inferred from homology"/>
<geneLocation type="chloroplast"/>
<feature type="chain" id="PRO_0000002577" description="ATP synthase subunit a, chloroplastic">
    <location>
        <begin position="1"/>
        <end position="248"/>
    </location>
</feature>
<feature type="transmembrane region" description="Helical" evidence="1">
    <location>
        <begin position="35"/>
        <end position="55"/>
    </location>
</feature>
<feature type="transmembrane region" description="Helical" evidence="1">
    <location>
        <begin position="94"/>
        <end position="114"/>
    </location>
</feature>
<feature type="transmembrane region" description="Helical" evidence="1">
    <location>
        <begin position="133"/>
        <end position="153"/>
    </location>
</feature>
<feature type="transmembrane region" description="Helical" evidence="1">
    <location>
        <begin position="202"/>
        <end position="222"/>
    </location>
</feature>
<feature type="transmembrane region" description="Helical" evidence="1">
    <location>
        <begin position="224"/>
        <end position="244"/>
    </location>
</feature>
<accession>Q02847</accession>
<reference key="1">
    <citation type="journal article" date="1992" name="J. Mol. Biol.">
        <title>Large ATP synthase operon of the red alga Antithamnion sp. resembles the corresponding operon in cyanobacteria.</title>
        <authorList>
            <person name="Kostrzewa M."/>
            <person name="Zetsche K."/>
        </authorList>
    </citation>
    <scope>NUCLEOTIDE SEQUENCE [GENOMIC DNA]</scope>
    <source>
        <strain>LB 95.79</strain>
    </source>
</reference>
<dbReference type="EMBL" id="X63382">
    <property type="protein sequence ID" value="CAA44988.1"/>
    <property type="molecule type" value="Genomic_DNA"/>
</dbReference>
<dbReference type="PIR" id="S26957">
    <property type="entry name" value="S26957"/>
</dbReference>
<dbReference type="SMR" id="Q02847"/>
<dbReference type="GO" id="GO:0009535">
    <property type="term" value="C:chloroplast thylakoid membrane"/>
    <property type="evidence" value="ECO:0007669"/>
    <property type="project" value="UniProtKB-SubCell"/>
</dbReference>
<dbReference type="GO" id="GO:0005886">
    <property type="term" value="C:plasma membrane"/>
    <property type="evidence" value="ECO:0007669"/>
    <property type="project" value="UniProtKB-UniRule"/>
</dbReference>
<dbReference type="GO" id="GO:0045259">
    <property type="term" value="C:proton-transporting ATP synthase complex"/>
    <property type="evidence" value="ECO:0007669"/>
    <property type="project" value="UniProtKB-KW"/>
</dbReference>
<dbReference type="GO" id="GO:0046933">
    <property type="term" value="F:proton-transporting ATP synthase activity, rotational mechanism"/>
    <property type="evidence" value="ECO:0007669"/>
    <property type="project" value="UniProtKB-UniRule"/>
</dbReference>
<dbReference type="CDD" id="cd00310">
    <property type="entry name" value="ATP-synt_Fo_a_6"/>
    <property type="match status" value="1"/>
</dbReference>
<dbReference type="FunFam" id="1.20.120.220:FF:000001">
    <property type="entry name" value="ATP synthase subunit a, chloroplastic"/>
    <property type="match status" value="1"/>
</dbReference>
<dbReference type="Gene3D" id="1.20.120.220">
    <property type="entry name" value="ATP synthase, F0 complex, subunit A"/>
    <property type="match status" value="1"/>
</dbReference>
<dbReference type="HAMAP" id="MF_01393">
    <property type="entry name" value="ATP_synth_a_bact"/>
    <property type="match status" value="1"/>
</dbReference>
<dbReference type="InterPro" id="IPR045082">
    <property type="entry name" value="ATP_syn_F0_a_bact/chloroplast"/>
</dbReference>
<dbReference type="InterPro" id="IPR000568">
    <property type="entry name" value="ATP_synth_F0_asu"/>
</dbReference>
<dbReference type="InterPro" id="IPR023011">
    <property type="entry name" value="ATP_synth_F0_asu_AS"/>
</dbReference>
<dbReference type="InterPro" id="IPR035908">
    <property type="entry name" value="F0_ATP_A_sf"/>
</dbReference>
<dbReference type="NCBIfam" id="TIGR01131">
    <property type="entry name" value="ATP_synt_6_or_A"/>
    <property type="match status" value="1"/>
</dbReference>
<dbReference type="PANTHER" id="PTHR42823">
    <property type="entry name" value="ATP SYNTHASE SUBUNIT A, CHLOROPLASTIC"/>
    <property type="match status" value="1"/>
</dbReference>
<dbReference type="PANTHER" id="PTHR42823:SF3">
    <property type="entry name" value="ATP SYNTHASE SUBUNIT A, CHLOROPLASTIC"/>
    <property type="match status" value="1"/>
</dbReference>
<dbReference type="Pfam" id="PF00119">
    <property type="entry name" value="ATP-synt_A"/>
    <property type="match status" value="1"/>
</dbReference>
<dbReference type="PRINTS" id="PR00123">
    <property type="entry name" value="ATPASEA"/>
</dbReference>
<dbReference type="SUPFAM" id="SSF81336">
    <property type="entry name" value="F1F0 ATP synthase subunit A"/>
    <property type="match status" value="1"/>
</dbReference>
<dbReference type="PROSITE" id="PS00449">
    <property type="entry name" value="ATPASE_A"/>
    <property type="match status" value="1"/>
</dbReference>
<comment type="function">
    <text evidence="1">Key component of the proton channel; it plays a direct role in the translocation of protons across the membrane.</text>
</comment>
<comment type="subunit">
    <text evidence="1">F-type ATPases have 2 components, CF(1) - the catalytic core - and CF(0) - the membrane proton channel. CF(1) has five subunits: alpha(3), beta(3), gamma(1), delta(1), epsilon(1). CF(0) has four main subunits: a, b, b' and c.</text>
</comment>
<comment type="subcellular location">
    <subcellularLocation>
        <location evidence="1">Plastid</location>
        <location evidence="1">Chloroplast thylakoid membrane</location>
        <topology evidence="1">Multi-pass membrane protein</topology>
    </subcellularLocation>
</comment>
<comment type="similarity">
    <text evidence="1">Belongs to the ATPase A chain family.</text>
</comment>
<evidence type="ECO:0000255" key="1">
    <source>
        <dbReference type="HAMAP-Rule" id="MF_01393"/>
    </source>
</evidence>
<gene>
    <name evidence="1" type="primary">atpI</name>
</gene>
<name>ATPI_ANTSP</name>
<sequence>MYHKEFELFYSFISVSSVEVGKHLYWTIGNYRIHGQVFIVSWLVMIVLISLAIAGTRNLTRTPQKFQNFMEFILEFLQDIAKNQIGEHEYRFWIPYISTIFLFILGSNWAGALIPWKLITLPEGELAAPTNDINTTVALALLTSLAYFYAGLSKNGIGYFSRYIEPTPVLLPINILEDFTKPLSLSFRLFGNVLADELVVSVFTLLVPILIPLPVMILGLFASSIQALIFSTLSAAYIGEALEGHGEE</sequence>
<organism>
    <name type="scientific">Antithamnion sp.</name>
    <name type="common">Red alga</name>
    <dbReference type="NCBI Taxonomy" id="2767"/>
    <lineage>
        <taxon>Eukaryota</taxon>
        <taxon>Rhodophyta</taxon>
        <taxon>Florideophyceae</taxon>
        <taxon>Rhodymeniophycidae</taxon>
        <taxon>Ceramiales</taxon>
        <taxon>Ceramiaceae</taxon>
        <taxon>Antithamnion</taxon>
    </lineage>
</organism>
<protein>
    <recommendedName>
        <fullName evidence="1">ATP synthase subunit a, chloroplastic</fullName>
    </recommendedName>
    <alternativeName>
        <fullName evidence="1">ATP synthase F0 sector subunit a</fullName>
    </alternativeName>
    <alternativeName>
        <fullName evidence="1">F-ATPase subunit IV</fullName>
    </alternativeName>
</protein>